<comment type="function">
    <text evidence="1">Catalyzes the reversible cyclization of carbamoyl aspartate to dihydroorotate.</text>
</comment>
<comment type="catalytic activity">
    <reaction evidence="1">
        <text>(S)-dihydroorotate + H2O = N-carbamoyl-L-aspartate + H(+)</text>
        <dbReference type="Rhea" id="RHEA:24296"/>
        <dbReference type="ChEBI" id="CHEBI:15377"/>
        <dbReference type="ChEBI" id="CHEBI:15378"/>
        <dbReference type="ChEBI" id="CHEBI:30864"/>
        <dbReference type="ChEBI" id="CHEBI:32814"/>
        <dbReference type="EC" id="3.5.2.3"/>
    </reaction>
</comment>
<comment type="cofactor">
    <cofactor evidence="1">
        <name>Zn(2+)</name>
        <dbReference type="ChEBI" id="CHEBI:29105"/>
    </cofactor>
    <text evidence="1">Binds 2 Zn(2+) ions per subunit.</text>
</comment>
<comment type="pathway">
    <text evidence="1">Pyrimidine metabolism; UMP biosynthesis via de novo pathway; (S)-dihydroorotate from bicarbonate: step 3/3.</text>
</comment>
<comment type="subunit">
    <text evidence="1">Homodimer.</text>
</comment>
<comment type="similarity">
    <text evidence="1">Belongs to the metallo-dependent hydrolases superfamily. DHOase family. Class II DHOase subfamily.</text>
</comment>
<gene>
    <name evidence="1" type="primary">pyrC</name>
    <name type="ordered locus">SeAg_B2025</name>
</gene>
<evidence type="ECO:0000255" key="1">
    <source>
        <dbReference type="HAMAP-Rule" id="MF_00219"/>
    </source>
</evidence>
<feature type="chain" id="PRO_1000100055" description="Dihydroorotase">
    <location>
        <begin position="1"/>
        <end position="348"/>
    </location>
</feature>
<feature type="active site" evidence="1">
    <location>
        <position position="251"/>
    </location>
</feature>
<feature type="binding site" evidence="1">
    <location>
        <position position="17"/>
    </location>
    <ligand>
        <name>Zn(2+)</name>
        <dbReference type="ChEBI" id="CHEBI:29105"/>
        <label>1</label>
    </ligand>
</feature>
<feature type="binding site" evidence="1">
    <location>
        <begin position="19"/>
        <end position="21"/>
    </location>
    <ligand>
        <name>substrate</name>
    </ligand>
</feature>
<feature type="binding site" evidence="1">
    <location>
        <position position="19"/>
    </location>
    <ligand>
        <name>Zn(2+)</name>
        <dbReference type="ChEBI" id="CHEBI:29105"/>
        <label>1</label>
    </ligand>
</feature>
<feature type="binding site" evidence="1">
    <location>
        <position position="45"/>
    </location>
    <ligand>
        <name>substrate</name>
    </ligand>
</feature>
<feature type="binding site" description="via carbamate group" evidence="1">
    <location>
        <position position="103"/>
    </location>
    <ligand>
        <name>Zn(2+)</name>
        <dbReference type="ChEBI" id="CHEBI:29105"/>
        <label>1</label>
    </ligand>
</feature>
<feature type="binding site" description="via carbamate group" evidence="1">
    <location>
        <position position="103"/>
    </location>
    <ligand>
        <name>Zn(2+)</name>
        <dbReference type="ChEBI" id="CHEBI:29105"/>
        <label>2</label>
    </ligand>
</feature>
<feature type="binding site" evidence="1">
    <location>
        <position position="140"/>
    </location>
    <ligand>
        <name>substrate</name>
    </ligand>
</feature>
<feature type="binding site" evidence="1">
    <location>
        <position position="140"/>
    </location>
    <ligand>
        <name>Zn(2+)</name>
        <dbReference type="ChEBI" id="CHEBI:29105"/>
        <label>2</label>
    </ligand>
</feature>
<feature type="binding site" evidence="1">
    <location>
        <position position="178"/>
    </location>
    <ligand>
        <name>Zn(2+)</name>
        <dbReference type="ChEBI" id="CHEBI:29105"/>
        <label>2</label>
    </ligand>
</feature>
<feature type="binding site" evidence="1">
    <location>
        <position position="223"/>
    </location>
    <ligand>
        <name>substrate</name>
    </ligand>
</feature>
<feature type="binding site" evidence="1">
    <location>
        <position position="251"/>
    </location>
    <ligand>
        <name>Zn(2+)</name>
        <dbReference type="ChEBI" id="CHEBI:29105"/>
        <label>1</label>
    </ligand>
</feature>
<feature type="binding site" evidence="1">
    <location>
        <position position="255"/>
    </location>
    <ligand>
        <name>substrate</name>
    </ligand>
</feature>
<feature type="binding site" evidence="1">
    <location>
        <position position="267"/>
    </location>
    <ligand>
        <name>substrate</name>
    </ligand>
</feature>
<feature type="modified residue" description="N6-carboxylysine" evidence="1">
    <location>
        <position position="103"/>
    </location>
</feature>
<protein>
    <recommendedName>
        <fullName evidence="1">Dihydroorotase</fullName>
        <shortName evidence="1">DHOase</shortName>
        <ecNumber evidence="1">3.5.2.3</ecNumber>
    </recommendedName>
</protein>
<proteinExistence type="inferred from homology"/>
<reference key="1">
    <citation type="journal article" date="2011" name="J. Bacteriol.">
        <title>Comparative genomics of 28 Salmonella enterica isolates: evidence for CRISPR-mediated adaptive sublineage evolution.</title>
        <authorList>
            <person name="Fricke W.F."/>
            <person name="Mammel M.K."/>
            <person name="McDermott P.F."/>
            <person name="Tartera C."/>
            <person name="White D.G."/>
            <person name="Leclerc J.E."/>
            <person name="Ravel J."/>
            <person name="Cebula T.A."/>
        </authorList>
    </citation>
    <scope>NUCLEOTIDE SEQUENCE [LARGE SCALE GENOMIC DNA]</scope>
    <source>
        <strain>SL483</strain>
    </source>
</reference>
<dbReference type="EC" id="3.5.2.3" evidence="1"/>
<dbReference type="EMBL" id="CP001138">
    <property type="protein sequence ID" value="ACH52249.1"/>
    <property type="molecule type" value="Genomic_DNA"/>
</dbReference>
<dbReference type="RefSeq" id="WP_000126601.1">
    <property type="nucleotide sequence ID" value="NC_011149.1"/>
</dbReference>
<dbReference type="SMR" id="B5F944"/>
<dbReference type="MEROPS" id="M38.A02"/>
<dbReference type="KEGG" id="sea:SeAg_B2025"/>
<dbReference type="HOGENOM" id="CLU_041558_1_0_6"/>
<dbReference type="UniPathway" id="UPA00070">
    <property type="reaction ID" value="UER00117"/>
</dbReference>
<dbReference type="Proteomes" id="UP000008819">
    <property type="component" value="Chromosome"/>
</dbReference>
<dbReference type="GO" id="GO:0005829">
    <property type="term" value="C:cytosol"/>
    <property type="evidence" value="ECO:0007669"/>
    <property type="project" value="TreeGrafter"/>
</dbReference>
<dbReference type="GO" id="GO:0004151">
    <property type="term" value="F:dihydroorotase activity"/>
    <property type="evidence" value="ECO:0007669"/>
    <property type="project" value="UniProtKB-UniRule"/>
</dbReference>
<dbReference type="GO" id="GO:0008270">
    <property type="term" value="F:zinc ion binding"/>
    <property type="evidence" value="ECO:0007669"/>
    <property type="project" value="UniProtKB-UniRule"/>
</dbReference>
<dbReference type="GO" id="GO:0006207">
    <property type="term" value="P:'de novo' pyrimidine nucleobase biosynthetic process"/>
    <property type="evidence" value="ECO:0007669"/>
    <property type="project" value="TreeGrafter"/>
</dbReference>
<dbReference type="GO" id="GO:0044205">
    <property type="term" value="P:'de novo' UMP biosynthetic process"/>
    <property type="evidence" value="ECO:0007669"/>
    <property type="project" value="UniProtKB-UniRule"/>
</dbReference>
<dbReference type="CDD" id="cd01294">
    <property type="entry name" value="DHOase"/>
    <property type="match status" value="1"/>
</dbReference>
<dbReference type="FunFam" id="3.20.20.140:FF:000006">
    <property type="entry name" value="Dihydroorotase"/>
    <property type="match status" value="1"/>
</dbReference>
<dbReference type="Gene3D" id="3.20.20.140">
    <property type="entry name" value="Metal-dependent hydrolases"/>
    <property type="match status" value="1"/>
</dbReference>
<dbReference type="HAMAP" id="MF_00219">
    <property type="entry name" value="PyrC_classII"/>
    <property type="match status" value="1"/>
</dbReference>
<dbReference type="InterPro" id="IPR006680">
    <property type="entry name" value="Amidohydro-rel"/>
</dbReference>
<dbReference type="InterPro" id="IPR004721">
    <property type="entry name" value="DHOdimr"/>
</dbReference>
<dbReference type="InterPro" id="IPR002195">
    <property type="entry name" value="Dihydroorotase_CS"/>
</dbReference>
<dbReference type="InterPro" id="IPR032466">
    <property type="entry name" value="Metal_Hydrolase"/>
</dbReference>
<dbReference type="NCBIfam" id="TIGR00856">
    <property type="entry name" value="pyrC_dimer"/>
    <property type="match status" value="1"/>
</dbReference>
<dbReference type="PANTHER" id="PTHR43137">
    <property type="entry name" value="DIHYDROOROTASE"/>
    <property type="match status" value="1"/>
</dbReference>
<dbReference type="PANTHER" id="PTHR43137:SF1">
    <property type="entry name" value="DIHYDROOROTASE"/>
    <property type="match status" value="1"/>
</dbReference>
<dbReference type="Pfam" id="PF01979">
    <property type="entry name" value="Amidohydro_1"/>
    <property type="match status" value="1"/>
</dbReference>
<dbReference type="PIRSF" id="PIRSF001237">
    <property type="entry name" value="DHOdimr"/>
    <property type="match status" value="1"/>
</dbReference>
<dbReference type="SUPFAM" id="SSF51556">
    <property type="entry name" value="Metallo-dependent hydrolases"/>
    <property type="match status" value="1"/>
</dbReference>
<dbReference type="PROSITE" id="PS00482">
    <property type="entry name" value="DIHYDROOROTASE_1"/>
    <property type="match status" value="1"/>
</dbReference>
<dbReference type="PROSITE" id="PS00483">
    <property type="entry name" value="DIHYDROOROTASE_2"/>
    <property type="match status" value="1"/>
</dbReference>
<accession>B5F944</accession>
<organism>
    <name type="scientific">Salmonella agona (strain SL483)</name>
    <dbReference type="NCBI Taxonomy" id="454166"/>
    <lineage>
        <taxon>Bacteria</taxon>
        <taxon>Pseudomonadati</taxon>
        <taxon>Pseudomonadota</taxon>
        <taxon>Gammaproteobacteria</taxon>
        <taxon>Enterobacterales</taxon>
        <taxon>Enterobacteriaceae</taxon>
        <taxon>Salmonella</taxon>
    </lineage>
</organism>
<name>PYRC_SALA4</name>
<sequence>MTAPSQVLKIRRPDDWHVHLRDGDMLKTVVPYTSEIYGRAIVMPNLASPITTVDAAIAYRQRILDAVPAGHDFTPLMTCYLTDSLDADELERGFHEGVFTAAKLYPANATTNSSHGVTSVDAIMPVLERMEKLGMPLLVHGEVTHAEVDIFDREARFIDTVMEPLRQRLTALKVVFEHITTKDAAQYVRDGNDYLAATITPQHLMFNRNDMLVGGIRPHLYCLPILKRNIHQQALRDLVASGFTRAFLGTDSAPHSRHRKETSCGCAGCFNAPSALGSYAAVFEEMNALAHFEAFCSLNGPQFYGLPVNTGWVELVRDEQQVPENIALADDSLVPFLAGETVRWSVKK</sequence>
<keyword id="KW-0378">Hydrolase</keyword>
<keyword id="KW-0479">Metal-binding</keyword>
<keyword id="KW-0665">Pyrimidine biosynthesis</keyword>
<keyword id="KW-0862">Zinc</keyword>